<organism>
    <name type="scientific">Acidothermus cellulolyticus (strain ATCC 43068 / DSM 8971 / 11B)</name>
    <dbReference type="NCBI Taxonomy" id="351607"/>
    <lineage>
        <taxon>Bacteria</taxon>
        <taxon>Bacillati</taxon>
        <taxon>Actinomycetota</taxon>
        <taxon>Actinomycetes</taxon>
        <taxon>Acidothermales</taxon>
        <taxon>Acidothermaceae</taxon>
        <taxon>Acidothermus</taxon>
    </lineage>
</organism>
<keyword id="KW-0067">ATP-binding</keyword>
<keyword id="KW-0173">Coenzyme A biosynthesis</keyword>
<keyword id="KW-0963">Cytoplasm</keyword>
<keyword id="KW-0418">Kinase</keyword>
<keyword id="KW-0479">Metal-binding</keyword>
<keyword id="KW-0547">Nucleotide-binding</keyword>
<keyword id="KW-0630">Potassium</keyword>
<keyword id="KW-1185">Reference proteome</keyword>
<keyword id="KW-0808">Transferase</keyword>
<name>COAX_ACIC1</name>
<feature type="chain" id="PRO_1000054353" description="Type III pantothenate kinase">
    <location>
        <begin position="1"/>
        <end position="256"/>
    </location>
</feature>
<feature type="active site" description="Proton acceptor" evidence="1">
    <location>
        <position position="109"/>
    </location>
</feature>
<feature type="binding site" evidence="1">
    <location>
        <begin position="6"/>
        <end position="13"/>
    </location>
    <ligand>
        <name>ATP</name>
        <dbReference type="ChEBI" id="CHEBI:30616"/>
    </ligand>
</feature>
<feature type="binding site" evidence="1">
    <location>
        <position position="100"/>
    </location>
    <ligand>
        <name>substrate</name>
    </ligand>
</feature>
<feature type="binding site" evidence="1">
    <location>
        <begin position="107"/>
        <end position="110"/>
    </location>
    <ligand>
        <name>substrate</name>
    </ligand>
</feature>
<feature type="binding site" evidence="1">
    <location>
        <position position="129"/>
    </location>
    <ligand>
        <name>K(+)</name>
        <dbReference type="ChEBI" id="CHEBI:29103"/>
    </ligand>
</feature>
<feature type="binding site" evidence="1">
    <location>
        <position position="132"/>
    </location>
    <ligand>
        <name>ATP</name>
        <dbReference type="ChEBI" id="CHEBI:30616"/>
    </ligand>
</feature>
<feature type="binding site" evidence="1">
    <location>
        <position position="184"/>
    </location>
    <ligand>
        <name>substrate</name>
    </ligand>
</feature>
<dbReference type="EC" id="2.7.1.33" evidence="1"/>
<dbReference type="EMBL" id="CP000481">
    <property type="protein sequence ID" value="ABK51989.1"/>
    <property type="molecule type" value="Genomic_DNA"/>
</dbReference>
<dbReference type="RefSeq" id="WP_011719053.1">
    <property type="nucleotide sequence ID" value="NC_008578.1"/>
</dbReference>
<dbReference type="SMR" id="A0LRC9"/>
<dbReference type="FunCoup" id="A0LRC9">
    <property type="interactions" value="125"/>
</dbReference>
<dbReference type="STRING" id="351607.Acel_0215"/>
<dbReference type="KEGG" id="ace:Acel_0215"/>
<dbReference type="eggNOG" id="COG1521">
    <property type="taxonomic scope" value="Bacteria"/>
</dbReference>
<dbReference type="HOGENOM" id="CLU_066627_1_0_11"/>
<dbReference type="InParanoid" id="A0LRC9"/>
<dbReference type="OrthoDB" id="9804707at2"/>
<dbReference type="UniPathway" id="UPA00241">
    <property type="reaction ID" value="UER00352"/>
</dbReference>
<dbReference type="Proteomes" id="UP000008221">
    <property type="component" value="Chromosome"/>
</dbReference>
<dbReference type="GO" id="GO:0005737">
    <property type="term" value="C:cytoplasm"/>
    <property type="evidence" value="ECO:0007669"/>
    <property type="project" value="UniProtKB-SubCell"/>
</dbReference>
<dbReference type="GO" id="GO:0005524">
    <property type="term" value="F:ATP binding"/>
    <property type="evidence" value="ECO:0007669"/>
    <property type="project" value="UniProtKB-UniRule"/>
</dbReference>
<dbReference type="GO" id="GO:0046872">
    <property type="term" value="F:metal ion binding"/>
    <property type="evidence" value="ECO:0007669"/>
    <property type="project" value="UniProtKB-KW"/>
</dbReference>
<dbReference type="GO" id="GO:0004594">
    <property type="term" value="F:pantothenate kinase activity"/>
    <property type="evidence" value="ECO:0007669"/>
    <property type="project" value="UniProtKB-UniRule"/>
</dbReference>
<dbReference type="GO" id="GO:0015937">
    <property type="term" value="P:coenzyme A biosynthetic process"/>
    <property type="evidence" value="ECO:0007669"/>
    <property type="project" value="UniProtKB-UniRule"/>
</dbReference>
<dbReference type="CDD" id="cd24015">
    <property type="entry name" value="ASKHA_NBD_PanK-III"/>
    <property type="match status" value="1"/>
</dbReference>
<dbReference type="Gene3D" id="3.30.420.40">
    <property type="match status" value="2"/>
</dbReference>
<dbReference type="HAMAP" id="MF_01274">
    <property type="entry name" value="Pantothen_kinase_3"/>
    <property type="match status" value="1"/>
</dbReference>
<dbReference type="InterPro" id="IPR043129">
    <property type="entry name" value="ATPase_NBD"/>
</dbReference>
<dbReference type="InterPro" id="IPR004619">
    <property type="entry name" value="Type_III_PanK"/>
</dbReference>
<dbReference type="NCBIfam" id="TIGR00671">
    <property type="entry name" value="baf"/>
    <property type="match status" value="1"/>
</dbReference>
<dbReference type="NCBIfam" id="NF009845">
    <property type="entry name" value="PRK13318.1-3"/>
    <property type="match status" value="1"/>
</dbReference>
<dbReference type="NCBIfam" id="NF009855">
    <property type="entry name" value="PRK13321.1"/>
    <property type="match status" value="1"/>
</dbReference>
<dbReference type="PANTHER" id="PTHR34265">
    <property type="entry name" value="TYPE III PANTOTHENATE KINASE"/>
    <property type="match status" value="1"/>
</dbReference>
<dbReference type="PANTHER" id="PTHR34265:SF1">
    <property type="entry name" value="TYPE III PANTOTHENATE KINASE"/>
    <property type="match status" value="1"/>
</dbReference>
<dbReference type="Pfam" id="PF03309">
    <property type="entry name" value="Pan_kinase"/>
    <property type="match status" value="1"/>
</dbReference>
<dbReference type="SUPFAM" id="SSF53067">
    <property type="entry name" value="Actin-like ATPase domain"/>
    <property type="match status" value="2"/>
</dbReference>
<protein>
    <recommendedName>
        <fullName evidence="1">Type III pantothenate kinase</fullName>
        <ecNumber evidence="1">2.7.1.33</ecNumber>
    </recommendedName>
    <alternativeName>
        <fullName evidence="1">PanK-III</fullName>
    </alternativeName>
    <alternativeName>
        <fullName evidence="1">Pantothenic acid kinase</fullName>
    </alternativeName>
</protein>
<proteinExistence type="inferred from homology"/>
<sequence length="256" mass="27177">MLLVIDIGNTHTVLGLFSGDTLVDHWRVATDARRTADELGFLIRGLLGQARRADGITGVSCCSTVPAALREVRTMSARWFPDAPLVVVEPGIRTGVPVLYDNPREVGADRIVNTLAAFTLHGGPAIVVDFGTSTNFDVVSARGEFLGGVLAPGIDISIDALASRAAQLVKVQVAKPRSVIGKNTVEALQAGIVYGFAAQVDGIVTRIAEQLPSRPVVIATGGLAPVVLDECRTVDVHDPWLTLTGLRLIFERNVPE</sequence>
<gene>
    <name evidence="1" type="primary">coaX</name>
    <name type="ordered locus">Acel_0215</name>
</gene>
<evidence type="ECO:0000255" key="1">
    <source>
        <dbReference type="HAMAP-Rule" id="MF_01274"/>
    </source>
</evidence>
<comment type="function">
    <text evidence="1">Catalyzes the phosphorylation of pantothenate (Pan), the first step in CoA biosynthesis.</text>
</comment>
<comment type="catalytic activity">
    <reaction evidence="1">
        <text>(R)-pantothenate + ATP = (R)-4'-phosphopantothenate + ADP + H(+)</text>
        <dbReference type="Rhea" id="RHEA:16373"/>
        <dbReference type="ChEBI" id="CHEBI:10986"/>
        <dbReference type="ChEBI" id="CHEBI:15378"/>
        <dbReference type="ChEBI" id="CHEBI:29032"/>
        <dbReference type="ChEBI" id="CHEBI:30616"/>
        <dbReference type="ChEBI" id="CHEBI:456216"/>
        <dbReference type="EC" id="2.7.1.33"/>
    </reaction>
</comment>
<comment type="cofactor">
    <cofactor evidence="1">
        <name>NH4(+)</name>
        <dbReference type="ChEBI" id="CHEBI:28938"/>
    </cofactor>
    <cofactor evidence="1">
        <name>K(+)</name>
        <dbReference type="ChEBI" id="CHEBI:29103"/>
    </cofactor>
    <text evidence="1">A monovalent cation. Ammonium or potassium.</text>
</comment>
<comment type="pathway">
    <text evidence="1">Cofactor biosynthesis; coenzyme A biosynthesis; CoA from (R)-pantothenate: step 1/5.</text>
</comment>
<comment type="subunit">
    <text evidence="1">Homodimer.</text>
</comment>
<comment type="subcellular location">
    <subcellularLocation>
        <location evidence="1">Cytoplasm</location>
    </subcellularLocation>
</comment>
<comment type="similarity">
    <text evidence="1">Belongs to the type III pantothenate kinase family.</text>
</comment>
<accession>A0LRC9</accession>
<reference key="1">
    <citation type="journal article" date="2009" name="Genome Res.">
        <title>Complete genome of the cellulolytic thermophile Acidothermus cellulolyticus 11B provides insights into its ecophysiological and evolutionary adaptations.</title>
        <authorList>
            <person name="Barabote R.D."/>
            <person name="Xie G."/>
            <person name="Leu D.H."/>
            <person name="Normand P."/>
            <person name="Necsulea A."/>
            <person name="Daubin V."/>
            <person name="Medigue C."/>
            <person name="Adney W.S."/>
            <person name="Xu X.C."/>
            <person name="Lapidus A."/>
            <person name="Parales R.E."/>
            <person name="Detter C."/>
            <person name="Pujic P."/>
            <person name="Bruce D."/>
            <person name="Lavire C."/>
            <person name="Challacombe J.F."/>
            <person name="Brettin T.S."/>
            <person name="Berry A.M."/>
        </authorList>
    </citation>
    <scope>NUCLEOTIDE SEQUENCE [LARGE SCALE GENOMIC DNA]</scope>
    <source>
        <strain>ATCC 43068 / DSM 8971 / 11B</strain>
    </source>
</reference>